<name>VPW_BIV29</name>
<protein>
    <recommendedName>
        <fullName>Protein Vpw</fullName>
    </recommendedName>
</protein>
<dbReference type="EMBL" id="M32690">
    <property type="status" value="NOT_ANNOTATED_CDS"/>
    <property type="molecule type" value="Genomic_RNA"/>
</dbReference>
<dbReference type="EMBL" id="L04974">
    <property type="status" value="NOT_ANNOTATED_CDS"/>
    <property type="molecule type" value="Genomic_DNA"/>
</dbReference>
<dbReference type="PIR" id="F34742">
    <property type="entry name" value="ASLJBW"/>
</dbReference>
<dbReference type="SMR" id="P24034"/>
<dbReference type="Proteomes" id="UP000243495">
    <property type="component" value="Segment"/>
</dbReference>
<reference key="1">
    <citation type="journal article" date="1990" name="Virology">
        <title>Nucleotide sequence and genome organization of biologically active proviruses of the bovine immunodeficiency-like virus.</title>
        <authorList>
            <person name="Garvey K.J."/>
            <person name="Oberste M.S."/>
            <person name="Elser J.E."/>
            <person name="Braun M.J."/>
            <person name="Gonda M.A."/>
        </authorList>
    </citation>
    <scope>NUCLEOTIDE SEQUENCE [GENOMIC RNA]</scope>
    <source>
        <strain>Isolate R29-106</strain>
        <strain>Isolate R29-127</strain>
    </source>
</reference>
<reference key="2">
    <citation type="submission" date="1992-11" db="EMBL/GenBank/DDBJ databases">
        <authorList>
            <person name="Nadin-Davis S.A."/>
            <person name="Chang S.C."/>
            <person name="Roth J.A."/>
            <person name="Carpenter S."/>
        </authorList>
    </citation>
    <scope>NUCLEOTIDE SEQUENCE [MRNA]</scope>
</reference>
<accession>P24034</accession>
<sequence length="54" mass="6620">MGVREADRIQHDRVRKKREISPYLPVRDLEKSLDDRNRIYRSKSVYDPSWNTHH</sequence>
<proteinExistence type="predicted"/>
<organismHost>
    <name type="scientific">Bos taurus</name>
    <name type="common">Bovine</name>
    <dbReference type="NCBI Taxonomy" id="9913"/>
</organismHost>
<gene>
    <name type="primary">vpw</name>
</gene>
<feature type="chain" id="PRO_0000085509" description="Protein Vpw">
    <location>
        <begin position="1"/>
        <end position="54"/>
    </location>
</feature>
<organism>
    <name type="scientific">Bovine immunodeficiency virus (strain R29)</name>
    <name type="common">BIV</name>
    <name type="synonym">Bovine immunodeficiency-like virus</name>
    <dbReference type="NCBI Taxonomy" id="417296"/>
    <lineage>
        <taxon>Viruses</taxon>
        <taxon>Riboviria</taxon>
        <taxon>Pararnavirae</taxon>
        <taxon>Artverviricota</taxon>
        <taxon>Revtraviricetes</taxon>
        <taxon>Ortervirales</taxon>
        <taxon>Retroviridae</taxon>
        <taxon>Orthoretrovirinae</taxon>
        <taxon>Lentivirus</taxon>
        <taxon>Bovine immunodeficiency virus</taxon>
    </lineage>
</organism>